<comment type="function">
    <text>Component of the inner layer of the cell wall.</text>
</comment>
<comment type="subcellular location">
    <subcellularLocation>
        <location>Secreted</location>
        <location>Cell wall</location>
    </subcellularLocation>
    <subcellularLocation>
        <location>Membrane</location>
        <topology>Lipid-anchor</topology>
        <topology>GPI-anchor</topology>
    </subcellularLocation>
    <text>Covalently-linked GPI-modified cell wall protein (GPI-CWP).</text>
</comment>
<comment type="PTM">
    <text>Extensively O-glycosylated.</text>
</comment>
<comment type="PTM">
    <text>The GPI-anchor is attached to the protein in the endoplasmic reticulum and serves to target the protein to the cell surface. There, the glucosamine-inositol phospholipid moiety is cleaved off and the GPI-modified mannoprotein is covalently attached via its lipidless GPI glycan remnant to the 1,6-beta-glucan of the outer cell wall layer.</text>
</comment>
<comment type="similarity">
    <text evidence="5">Belongs to the CCW14 family.</text>
</comment>
<gene>
    <name type="primary">CCW14</name>
    <name type="synonym">ICWP</name>
    <name type="synonym">SSR1</name>
    <name type="ordered locus">YLR390W-A</name>
    <name type="ORF">YLR391W-A</name>
</gene>
<reference key="1">
    <citation type="journal article" date="1997" name="J. Bacteriol.">
        <title>Identification of a mannoprotein present in the inner layer of the cell wall of Saccharomyces cerevisiae.</title>
        <authorList>
            <person name="Moukadiri I."/>
            <person name="Armero J."/>
            <person name="Abad A."/>
            <person name="Sentandreu R."/>
            <person name="Zueco J."/>
        </authorList>
    </citation>
    <scope>NUCLEOTIDE SEQUENCE [GENOMIC DNA]</scope>
    <scope>CHARACTERIZATION</scope>
    <scope>SUBCELLULAR LOCATION</scope>
</reference>
<reference key="2">
    <citation type="journal article" date="1997" name="Nature">
        <title>The nucleotide sequence of Saccharomyces cerevisiae chromosome XII.</title>
        <authorList>
            <person name="Johnston M."/>
            <person name="Hillier L.W."/>
            <person name="Riles L."/>
            <person name="Albermann K."/>
            <person name="Andre B."/>
            <person name="Ansorge W."/>
            <person name="Benes V."/>
            <person name="Brueckner M."/>
            <person name="Delius H."/>
            <person name="Dubois E."/>
            <person name="Duesterhoeft A."/>
            <person name="Entian K.-D."/>
            <person name="Floeth M."/>
            <person name="Goffeau A."/>
            <person name="Hebling U."/>
            <person name="Heumann K."/>
            <person name="Heuss-Neitzel D."/>
            <person name="Hilbert H."/>
            <person name="Hilger F."/>
            <person name="Kleine K."/>
            <person name="Koetter P."/>
            <person name="Louis E.J."/>
            <person name="Messenguy F."/>
            <person name="Mewes H.-W."/>
            <person name="Miosga T."/>
            <person name="Moestl D."/>
            <person name="Mueller-Auer S."/>
            <person name="Nentwich U."/>
            <person name="Obermaier B."/>
            <person name="Piravandi E."/>
            <person name="Pohl T.M."/>
            <person name="Portetelle D."/>
            <person name="Purnelle B."/>
            <person name="Rechmann S."/>
            <person name="Rieger M."/>
            <person name="Rinke M."/>
            <person name="Rose M."/>
            <person name="Scharfe M."/>
            <person name="Scherens B."/>
            <person name="Scholler P."/>
            <person name="Schwager C."/>
            <person name="Schwarz S."/>
            <person name="Underwood A.P."/>
            <person name="Urrestarazu L.A."/>
            <person name="Vandenbol M."/>
            <person name="Verhasselt P."/>
            <person name="Vierendeels F."/>
            <person name="Voet M."/>
            <person name="Volckaert G."/>
            <person name="Voss H."/>
            <person name="Wambutt R."/>
            <person name="Wedler E."/>
            <person name="Wedler H."/>
            <person name="Zimmermann F.K."/>
            <person name="Zollner A."/>
            <person name="Hani J."/>
            <person name="Hoheisel J.D."/>
        </authorList>
    </citation>
    <scope>NUCLEOTIDE SEQUENCE [LARGE SCALE GENOMIC DNA]</scope>
    <source>
        <strain>ATCC 204508 / S288c</strain>
    </source>
</reference>
<reference key="3">
    <citation type="journal article" date="2014" name="G3 (Bethesda)">
        <title>The reference genome sequence of Saccharomyces cerevisiae: Then and now.</title>
        <authorList>
            <person name="Engel S.R."/>
            <person name="Dietrich F.S."/>
            <person name="Fisk D.G."/>
            <person name="Binkley G."/>
            <person name="Balakrishnan R."/>
            <person name="Costanzo M.C."/>
            <person name="Dwight S.S."/>
            <person name="Hitz B.C."/>
            <person name="Karra K."/>
            <person name="Nash R.S."/>
            <person name="Weng S."/>
            <person name="Wong E.D."/>
            <person name="Lloyd P."/>
            <person name="Skrzypek M.S."/>
            <person name="Miyasato S.R."/>
            <person name="Simison M."/>
            <person name="Cherry J.M."/>
        </authorList>
    </citation>
    <scope>GENOME REANNOTATION</scope>
    <source>
        <strain>ATCC 204508 / S288c</strain>
    </source>
</reference>
<reference key="4">
    <citation type="journal article" date="1999" name="J. Bacteriol.">
        <title>Deletion of new covalently linked cell wall glycoproteins alters the electrophoretic mobility of phosphorylated wall components of Saccharomyces cerevisiae.</title>
        <authorList>
            <person name="Mrsa V."/>
            <person name="Ecker M."/>
            <person name="Strahl-Bolsinger S."/>
            <person name="Nimtz M."/>
            <person name="Lehle L."/>
            <person name="Tanner W."/>
        </authorList>
    </citation>
    <scope>PROTEIN SEQUENCE OF 23-35</scope>
    <scope>CHARACTERIZATION</scope>
    <scope>SUBCELLULAR LOCATION</scope>
</reference>
<reference key="5">
    <citation type="journal article" date="2005" name="J. Biol. Chem.">
        <title>Comprehensive proteomic analysis of Saccharomyces cerevisiae cell walls: identification of proteins covalently attached via glycosylphosphatidylinositol remnants or mild alkali-sensitive linkages.</title>
        <authorList>
            <person name="Yin Q.Y."/>
            <person name="de Groot P.W.J."/>
            <person name="Dekker H.L."/>
            <person name="de Jong L."/>
            <person name="Klis F.M."/>
            <person name="de Koster C.G."/>
        </authorList>
    </citation>
    <scope>SUBCELLULAR LOCATION</scope>
    <scope>IDENTIFICATION BY MASS SPECTROMETRY</scope>
    <scope>GPI-ANCHOR</scope>
</reference>
<reference key="6">
    <citation type="journal article" date="2012" name="Proteomics">
        <title>Sites of ubiquitin attachment in Saccharomyces cerevisiae.</title>
        <authorList>
            <person name="Starita L.M."/>
            <person name="Lo R.S."/>
            <person name="Eng J.K."/>
            <person name="von Haller P.D."/>
            <person name="Fields S."/>
        </authorList>
    </citation>
    <scope>UBIQUITINATION [LARGE SCALE ANALYSIS] AT LYS-161</scope>
    <scope>IDENTIFICATION BY MASS SPECTROMETRY [LARGE SCALE ANALYSIS]</scope>
</reference>
<dbReference type="EMBL" id="U19729">
    <property type="protein sequence ID" value="AAB82348.1"/>
    <property type="molecule type" value="Genomic_DNA"/>
</dbReference>
<dbReference type="EMBL" id="BK006945">
    <property type="protein sequence ID" value="DAA09692.1"/>
    <property type="molecule type" value="Genomic_DNA"/>
</dbReference>
<dbReference type="PIR" id="S77699">
    <property type="entry name" value="S77699"/>
</dbReference>
<dbReference type="RefSeq" id="NP_013495.1">
    <property type="nucleotide sequence ID" value="NM_001184303.1"/>
</dbReference>
<dbReference type="BioGRID" id="31650">
    <property type="interactions" value="84"/>
</dbReference>
<dbReference type="DIP" id="DIP-1301N"/>
<dbReference type="FunCoup" id="O13547">
    <property type="interactions" value="55"/>
</dbReference>
<dbReference type="IntAct" id="O13547">
    <property type="interactions" value="2"/>
</dbReference>
<dbReference type="STRING" id="4932.YLR390W-A"/>
<dbReference type="GlyCosmos" id="O13547">
    <property type="glycosylation" value="1 site, No reported glycans"/>
</dbReference>
<dbReference type="GlyGen" id="O13547">
    <property type="glycosylation" value="1 site"/>
</dbReference>
<dbReference type="iPTMnet" id="O13547"/>
<dbReference type="PaxDb" id="4932-YLR390W-A"/>
<dbReference type="PeptideAtlas" id="O13547"/>
<dbReference type="EnsemblFungi" id="YLR390W-A_mRNA">
    <property type="protein sequence ID" value="YLR390W-A"/>
    <property type="gene ID" value="YLR390W-A"/>
</dbReference>
<dbReference type="GeneID" id="851107"/>
<dbReference type="KEGG" id="sce:YLR390W-A"/>
<dbReference type="AGR" id="SGD:S000006429"/>
<dbReference type="SGD" id="S000006429">
    <property type="gene designation" value="CCW14"/>
</dbReference>
<dbReference type="VEuPathDB" id="FungiDB:YLR390W-A"/>
<dbReference type="eggNOG" id="ENOG502S1X2">
    <property type="taxonomic scope" value="Eukaryota"/>
</dbReference>
<dbReference type="HOGENOM" id="CLU_078308_0_0_1"/>
<dbReference type="InParanoid" id="O13547"/>
<dbReference type="OMA" id="ICPNDNA"/>
<dbReference type="OrthoDB" id="4095829at2759"/>
<dbReference type="BioCyc" id="YEAST:G3O-32518-MONOMER"/>
<dbReference type="BioGRID-ORCS" id="851107">
    <property type="hits" value="0 hits in 10 CRISPR screens"/>
</dbReference>
<dbReference type="PRO" id="PR:O13547"/>
<dbReference type="Proteomes" id="UP000002311">
    <property type="component" value="Chromosome XII"/>
</dbReference>
<dbReference type="RNAct" id="O13547">
    <property type="molecule type" value="protein"/>
</dbReference>
<dbReference type="GO" id="GO:0071944">
    <property type="term" value="C:cell periphery"/>
    <property type="evidence" value="ECO:0007005"/>
    <property type="project" value="SGD"/>
</dbReference>
<dbReference type="GO" id="GO:0005576">
    <property type="term" value="C:extracellular region"/>
    <property type="evidence" value="ECO:0007669"/>
    <property type="project" value="UniProtKB-KW"/>
</dbReference>
<dbReference type="GO" id="GO:0009277">
    <property type="term" value="C:fungal-type cell wall"/>
    <property type="evidence" value="ECO:0000314"/>
    <property type="project" value="SGD"/>
</dbReference>
<dbReference type="GO" id="GO:0005739">
    <property type="term" value="C:mitochondrion"/>
    <property type="evidence" value="ECO:0007005"/>
    <property type="project" value="SGD"/>
</dbReference>
<dbReference type="GO" id="GO:0098552">
    <property type="term" value="C:side of membrane"/>
    <property type="evidence" value="ECO:0007669"/>
    <property type="project" value="UniProtKB-KW"/>
</dbReference>
<dbReference type="GO" id="GO:0005199">
    <property type="term" value="F:structural constituent of cell wall"/>
    <property type="evidence" value="ECO:0000314"/>
    <property type="project" value="SGD"/>
</dbReference>
<dbReference type="GO" id="GO:0031505">
    <property type="term" value="P:fungal-type cell wall organization"/>
    <property type="evidence" value="ECO:0000315"/>
    <property type="project" value="SGD"/>
</dbReference>
<dbReference type="InterPro" id="IPR008427">
    <property type="entry name" value="Extracellular_membr_CFEM_dom"/>
</dbReference>
<dbReference type="Pfam" id="PF05730">
    <property type="entry name" value="CFEM"/>
    <property type="match status" value="1"/>
</dbReference>
<dbReference type="SMART" id="SM00747">
    <property type="entry name" value="CFEM"/>
    <property type="match status" value="1"/>
</dbReference>
<dbReference type="PROSITE" id="PS52012">
    <property type="entry name" value="CFEM"/>
    <property type="match status" value="1"/>
</dbReference>
<evidence type="ECO:0000255" key="1"/>
<evidence type="ECO:0000255" key="2">
    <source>
        <dbReference type="PROSITE-ProRule" id="PRU01356"/>
    </source>
</evidence>
<evidence type="ECO:0000256" key="3">
    <source>
        <dbReference type="SAM" id="MobiDB-lite"/>
    </source>
</evidence>
<evidence type="ECO:0000269" key="4">
    <source>
    </source>
</evidence>
<evidence type="ECO:0000305" key="5"/>
<evidence type="ECO:0007744" key="6">
    <source>
    </source>
</evidence>
<proteinExistence type="evidence at protein level"/>
<keyword id="KW-0134">Cell wall</keyword>
<keyword id="KW-0903">Direct protein sequencing</keyword>
<keyword id="KW-1015">Disulfide bond</keyword>
<keyword id="KW-0325">Glycoprotein</keyword>
<keyword id="KW-0336">GPI-anchor</keyword>
<keyword id="KW-1017">Isopeptide bond</keyword>
<keyword id="KW-0449">Lipoprotein</keyword>
<keyword id="KW-0472">Membrane</keyword>
<keyword id="KW-1185">Reference proteome</keyword>
<keyword id="KW-0964">Secreted</keyword>
<keyword id="KW-0732">Signal</keyword>
<keyword id="KW-0832">Ubl conjugation</keyword>
<organism>
    <name type="scientific">Saccharomyces cerevisiae (strain ATCC 204508 / S288c)</name>
    <name type="common">Baker's yeast</name>
    <dbReference type="NCBI Taxonomy" id="559292"/>
    <lineage>
        <taxon>Eukaryota</taxon>
        <taxon>Fungi</taxon>
        <taxon>Dikarya</taxon>
        <taxon>Ascomycota</taxon>
        <taxon>Saccharomycotina</taxon>
        <taxon>Saccharomycetes</taxon>
        <taxon>Saccharomycetales</taxon>
        <taxon>Saccharomycetaceae</taxon>
        <taxon>Saccharomyces</taxon>
    </lineage>
</organism>
<accession>O13547</accession>
<accession>D6VZ26</accession>
<name>CCW14_YEAST</name>
<feature type="signal peptide" evidence="4">
    <location>
        <begin position="1"/>
        <end position="22"/>
    </location>
</feature>
<feature type="chain" id="PRO_0000020881" description="Covalently-linked cell wall protein 14">
    <location>
        <begin position="23"/>
        <end position="217"/>
    </location>
</feature>
<feature type="propeptide" id="PRO_0000020882" description="Removed in mature form" evidence="1">
    <location>
        <begin position="218"/>
        <end position="238"/>
    </location>
</feature>
<feature type="domain" description="CFEM" evidence="2">
    <location>
        <begin position="23"/>
        <end position="110"/>
    </location>
</feature>
<feature type="region of interest" description="Disordered" evidence="3">
    <location>
        <begin position="91"/>
        <end position="203"/>
    </location>
</feature>
<feature type="compositionally biased region" description="Low complexity" evidence="3">
    <location>
        <begin position="93"/>
        <end position="203"/>
    </location>
</feature>
<feature type="lipid moiety-binding region" description="GPI-anchor amidated glycine" evidence="1">
    <location>
        <position position="217"/>
    </location>
</feature>
<feature type="glycosylation site" description="N-linked (GlcNAc...) asparagine" evidence="1">
    <location>
        <position position="87"/>
    </location>
</feature>
<feature type="disulfide bond" evidence="2">
    <location>
        <begin position="27"/>
        <end position="67"/>
    </location>
</feature>
<feature type="disulfide bond" evidence="2">
    <location>
        <begin position="31"/>
        <end position="62"/>
    </location>
</feature>
<feature type="disulfide bond" evidence="2">
    <location>
        <begin position="42"/>
        <end position="50"/>
    </location>
</feature>
<feature type="disulfide bond" evidence="2">
    <location>
        <begin position="52"/>
        <end position="83"/>
    </location>
</feature>
<feature type="cross-link" description="Glycyl lysine isopeptide (Lys-Gly) (interchain with G-Cter in ubiquitin)" evidence="6">
    <location>
        <position position="161"/>
    </location>
</feature>
<sequence length="238" mass="23268">MRATTLLSSVVSLALLSKEVLATPPACLLACVAQVGKSSSTCDSLNQVTCYCEHENSAVKKCLDSICPNNDADAAYSAFKSSCSEQNASLGDSSSSASSSASSSSKASSSTKASSSSASSSTKASSSSASSSTKASSSSAAPSSSKASSTESSSSSSSSTKAPSSEESSSTYVSSSKQASSTSEAHSSSAASSTVSQETVSSALPTSTAVISTFSEGSGNVLEAGKSVFIAAVAAMLI</sequence>
<protein>
    <recommendedName>
        <fullName>Covalently-linked cell wall protein 14</fullName>
    </recommendedName>
    <alternativeName>
        <fullName>Inner cell wall protein</fullName>
    </alternativeName>
</protein>